<evidence type="ECO:0000256" key="1">
    <source>
        <dbReference type="SAM" id="MobiDB-lite"/>
    </source>
</evidence>
<evidence type="ECO:0000269" key="2">
    <source>
    </source>
</evidence>
<evidence type="ECO:0000303" key="3">
    <source>
    </source>
</evidence>
<evidence type="ECO:0000305" key="4"/>
<evidence type="ECO:0000305" key="5">
    <source>
    </source>
</evidence>
<evidence type="ECO:0007744" key="6">
    <source>
        <dbReference type="PDB" id="7DVQ"/>
    </source>
</evidence>
<evidence type="ECO:0007829" key="7">
    <source>
        <dbReference type="PDB" id="7DVQ"/>
    </source>
</evidence>
<keyword id="KW-0002">3D-structure</keyword>
<keyword id="KW-0025">Alternative splicing</keyword>
<keyword id="KW-0507">mRNA processing</keyword>
<keyword id="KW-0508">mRNA splicing</keyword>
<keyword id="KW-1267">Proteomics identification</keyword>
<keyword id="KW-1185">Reference proteome</keyword>
<keyword id="KW-0694">RNA-binding</keyword>
<keyword id="KW-0747">Spliceosome</keyword>
<comment type="function">
    <text evidence="5">As a component of the minor spliceosome, involved in the splicing of U12-type introns in pre-mRNAs.</text>
</comment>
<comment type="subunit">
    <text evidence="2">Component of the minor spliceosome. Within this complex, interacts with ARMC7 and PRPF8/PRP8.</text>
</comment>
<comment type="interaction">
    <interactant intactId="EBI-473821">
        <id>Q5RL73</id>
    </interactant>
    <interactant intactId="EBI-17286414">
        <id>A2BDD9</id>
        <label>AMOT</label>
    </interactant>
    <organismsDiffer>false</organismsDiffer>
    <experiments>3</experiments>
</comment>
<comment type="interaction">
    <interactant intactId="EBI-473821">
        <id>Q5RL73</id>
    </interactant>
    <interactant intactId="EBI-742909">
        <id>Q9H6L4</id>
        <label>ARMC7</label>
    </interactant>
    <organismsDiffer>false</organismsDiffer>
    <experiments>6</experiments>
</comment>
<comment type="interaction">
    <interactant intactId="EBI-473821">
        <id>Q5RL73</id>
    </interactant>
    <interactant intactId="EBI-1166928">
        <id>Q8N5M1</id>
        <label>ATPAF2</label>
    </interactant>
    <organismsDiffer>false</organismsDiffer>
    <experiments>3</experiments>
</comment>
<comment type="interaction">
    <interactant intactId="EBI-473821">
        <id>Q5RL73</id>
    </interactant>
    <interactant intactId="EBI-10961624">
        <id>Q2TAC2-2</id>
        <label>CCDC57</label>
    </interactant>
    <organismsDiffer>false</organismsDiffer>
    <experiments>3</experiments>
</comment>
<comment type="interaction">
    <interactant intactId="EBI-473821">
        <id>Q5RL73</id>
    </interactant>
    <interactant intactId="EBI-1053725">
        <id>P10606</id>
        <label>COX5B</label>
    </interactant>
    <organismsDiffer>false</organismsDiffer>
    <experiments>3</experiments>
</comment>
<comment type="interaction">
    <interactant intactId="EBI-473821">
        <id>Q5RL73</id>
    </interactant>
    <interactant intactId="EBI-750700">
        <id>Q8N9N8</id>
        <label>EIF1AD</label>
    </interactant>
    <organismsDiffer>false</organismsDiffer>
    <experiments>3</experiments>
</comment>
<comment type="interaction">
    <interactant intactId="EBI-473821">
        <id>Q5RL73</id>
    </interactant>
    <interactant intactId="EBI-6658203">
        <id>Q86YD7</id>
        <label>FAM90A1</label>
    </interactant>
    <organismsDiffer>false</organismsDiffer>
    <experiments>3</experiments>
</comment>
<comment type="interaction">
    <interactant intactId="EBI-473821">
        <id>Q5RL73</id>
    </interactant>
    <interactant intactId="EBI-740553">
        <id>P13807</id>
        <label>GYS1</label>
    </interactant>
    <organismsDiffer>false</organismsDiffer>
    <experiments>3</experiments>
</comment>
<comment type="interaction">
    <interactant intactId="EBI-473821">
        <id>Q5RL73</id>
    </interactant>
    <interactant intactId="EBI-7116203">
        <id>O75031</id>
        <label>HSF2BP</label>
    </interactant>
    <organismsDiffer>false</organismsDiffer>
    <experiments>3</experiments>
</comment>
<comment type="interaction">
    <interactant intactId="EBI-473821">
        <id>Q5RL73</id>
    </interactant>
    <interactant intactId="EBI-10268138">
        <id>Q8N9B5-2</id>
        <label>JMY</label>
    </interactant>
    <organismsDiffer>false</organismsDiffer>
    <experiments>3</experiments>
</comment>
<comment type="interaction">
    <interactant intactId="EBI-473821">
        <id>Q5RL73</id>
    </interactant>
    <interactant intactId="EBI-8472129">
        <id>Q9HAQ2</id>
        <label>KIF9</label>
    </interactant>
    <organismsDiffer>false</organismsDiffer>
    <experiments>3</experiments>
</comment>
<comment type="interaction">
    <interactant intactId="EBI-473821">
        <id>Q5RL73</id>
    </interactant>
    <interactant intactId="EBI-744248">
        <id>P40692</id>
        <label>MLH1</label>
    </interactant>
    <organismsDiffer>false</organismsDiffer>
    <experiments>3</experiments>
</comment>
<comment type="interaction">
    <interactant intactId="EBI-473821">
        <id>Q5RL73</id>
    </interactant>
    <interactant intactId="EBI-741158">
        <id>Q96HA8</id>
        <label>NTAQ1</label>
    </interactant>
    <organismsDiffer>false</organismsDiffer>
    <experiments>3</experiments>
</comment>
<comment type="interaction">
    <interactant intactId="EBI-473821">
        <id>Q5RL73</id>
    </interactant>
    <interactant intactId="EBI-14066006">
        <id>Q4G0R1</id>
        <label>PIBF1</label>
    </interactant>
    <organismsDiffer>false</organismsDiffer>
    <experiments>3</experiments>
</comment>
<comment type="interaction">
    <interactant intactId="EBI-473821">
        <id>Q5RL73</id>
    </interactant>
    <interactant intactId="EBI-1055079">
        <id>O15160</id>
        <label>POLR1C</label>
    </interactant>
    <organismsDiffer>false</organismsDiffer>
    <experiments>3</experiments>
</comment>
<comment type="interaction">
    <interactant intactId="EBI-473821">
        <id>Q5RL73</id>
    </interactant>
    <interactant intactId="EBI-1053424">
        <id>O43741</id>
        <label>PRKAB2</label>
    </interactant>
    <organismsDiffer>false</organismsDiffer>
    <experiments>3</experiments>
</comment>
<comment type="interaction">
    <interactant intactId="EBI-473821">
        <id>Q5RL73</id>
    </interactant>
    <interactant intactId="EBI-1055693">
        <id>O75771</id>
        <label>RAD51D</label>
    </interactant>
    <organismsDiffer>false</organismsDiffer>
    <experiments>3</experiments>
</comment>
<comment type="interaction">
    <interactant intactId="EBI-473821">
        <id>Q5RL73</id>
    </interactant>
    <interactant intactId="EBI-12198403">
        <id>Q8WXG8</id>
        <label>S100Z</label>
    </interactant>
    <organismsDiffer>false</organismsDiffer>
    <experiments>3</experiments>
</comment>
<comment type="interaction">
    <interactant intactId="EBI-473821">
        <id>Q5RL73</id>
    </interactant>
    <interactant intactId="EBI-748391">
        <id>Q9BWG6</id>
        <label>SCNM1</label>
    </interactant>
    <organismsDiffer>false</organismsDiffer>
    <experiments>3</experiments>
</comment>
<comment type="interaction">
    <interactant intactId="EBI-473821">
        <id>Q5RL73</id>
    </interactant>
    <interactant intactId="EBI-7082156">
        <id>Q7Z698</id>
        <label>SPRED2</label>
    </interactant>
    <organismsDiffer>false</organismsDiffer>
    <experiments>3</experiments>
</comment>
<comment type="interaction">
    <interactant intactId="EBI-473821">
        <id>Q5RL73</id>
    </interactant>
    <interactant intactId="EBI-8787464">
        <id>Q9NU19</id>
        <label>TBC1D22B</label>
    </interactant>
    <organismsDiffer>false</organismsDiffer>
    <experiments>3</experiments>
</comment>
<comment type="interaction">
    <interactant intactId="EBI-473821">
        <id>Q5RL73</id>
    </interactant>
    <interactant intactId="EBI-750487">
        <id>Q8WW24</id>
        <label>TEKT4</label>
    </interactant>
    <organismsDiffer>false</organismsDiffer>
    <experiments>3</experiments>
</comment>
<comment type="interaction">
    <interactant intactId="EBI-473821">
        <id>Q5RL73</id>
    </interactant>
    <interactant intactId="EBI-746981">
        <id>Q969E8</id>
        <label>TSR2</label>
    </interactant>
    <organismsDiffer>false</organismsDiffer>
    <experiments>3</experiments>
</comment>
<comment type="alternative products">
    <event type="alternative splicing"/>
    <isoform>
        <id>Q5RL73-1</id>
        <name>1</name>
        <sequence type="displayed"/>
    </isoform>
    <isoform>
        <id>Q5RL73-2</id>
        <name>2</name>
        <sequence type="described" ref="VSP_056683"/>
    </isoform>
</comment>
<comment type="similarity">
    <text evidence="4">Belongs to the RBM48 family.</text>
</comment>
<comment type="sequence caution" evidence="4">
    <conflict type="erroneous initiation">
        <sequence resource="EMBL-CDS" id="AAH33561"/>
    </conflict>
    <text>Extended N-terminus.</text>
</comment>
<comment type="sequence caution" evidence="4">
    <conflict type="erroneous initiation">
        <sequence resource="EMBL-CDS" id="BAB70806"/>
    </conflict>
    <text>Truncated N-terminus.</text>
</comment>
<comment type="sequence caution" evidence="4">
    <conflict type="frameshift">
        <sequence resource="EMBL-CDS" id="CAB66554"/>
    </conflict>
</comment>
<comment type="sequence caution" evidence="4">
    <conflict type="erroneous translation">
        <sequence resource="EMBL-CDS" id="CAI45942"/>
    </conflict>
    <text>The protein sequence does not correspond to the translation of the nucleic acid sequence.</text>
</comment>
<comment type="sequence caution" evidence="4">
    <conflict type="erroneous gene model prediction">
        <sequence resource="EMBL-CDS" id="EAL24148"/>
    </conflict>
</comment>
<proteinExistence type="evidence at protein level"/>
<name>RBM48_HUMAN</name>
<dbReference type="EMBL" id="AL136619">
    <property type="protein sequence ID" value="CAB66554.1"/>
    <property type="status" value="ALT_FRAME"/>
    <property type="molecule type" value="mRNA"/>
</dbReference>
<dbReference type="EMBL" id="CR933641">
    <property type="protein sequence ID" value="CAI45942.1"/>
    <property type="status" value="ALT_SEQ"/>
    <property type="molecule type" value="mRNA"/>
</dbReference>
<dbReference type="EMBL" id="AK054777">
    <property type="protein sequence ID" value="BAB70806.1"/>
    <property type="status" value="ALT_INIT"/>
    <property type="molecule type" value="mRNA"/>
</dbReference>
<dbReference type="EMBL" id="AK294812">
    <property type="protein sequence ID" value="BAH11891.1"/>
    <property type="molecule type" value="mRNA"/>
</dbReference>
<dbReference type="EMBL" id="AC005156">
    <property type="status" value="NOT_ANNOTATED_CDS"/>
    <property type="molecule type" value="Genomic_DNA"/>
</dbReference>
<dbReference type="EMBL" id="AC007566">
    <property type="status" value="NOT_ANNOTATED_CDS"/>
    <property type="molecule type" value="Genomic_DNA"/>
</dbReference>
<dbReference type="EMBL" id="CH471091">
    <property type="protein sequence ID" value="EAW76839.1"/>
    <property type="molecule type" value="Genomic_DNA"/>
</dbReference>
<dbReference type="EMBL" id="CH236949">
    <property type="protein sequence ID" value="EAL24148.1"/>
    <property type="status" value="ALT_SEQ"/>
    <property type="molecule type" value="Genomic_DNA"/>
</dbReference>
<dbReference type="EMBL" id="BC033561">
    <property type="protein sequence ID" value="AAH33561.1"/>
    <property type="status" value="ALT_INIT"/>
    <property type="molecule type" value="mRNA"/>
</dbReference>
<dbReference type="EMBL" id="BC044570">
    <property type="protein sequence ID" value="AAH44570.1"/>
    <property type="molecule type" value="mRNA"/>
</dbReference>
<dbReference type="EMBL" id="BC104865">
    <property type="protein sequence ID" value="AAI04866.1"/>
    <property type="molecule type" value="mRNA"/>
</dbReference>
<dbReference type="EMBL" id="BC104867">
    <property type="protein sequence ID" value="AAI04868.1"/>
    <property type="molecule type" value="mRNA"/>
</dbReference>
<dbReference type="EMBL" id="BC143576">
    <property type="protein sequence ID" value="AAI43577.1"/>
    <property type="molecule type" value="mRNA"/>
</dbReference>
<dbReference type="CCDS" id="CCDS43615.1">
    <molecule id="Q5RL73-1"/>
</dbReference>
<dbReference type="RefSeq" id="NP_115496.2">
    <molecule id="Q5RL73-1"/>
    <property type="nucleotide sequence ID" value="NM_032120.4"/>
</dbReference>
<dbReference type="RefSeq" id="XP_005250693.1">
    <molecule id="Q5RL73-2"/>
    <property type="nucleotide sequence ID" value="XM_005250636.6"/>
</dbReference>
<dbReference type="RefSeq" id="XP_054215171.1">
    <molecule id="Q5RL73-2"/>
    <property type="nucleotide sequence ID" value="XM_054359196.1"/>
</dbReference>
<dbReference type="PDB" id="7DVQ">
    <property type="method" value="EM"/>
    <property type="resolution" value="2.89 A"/>
    <property type="chains" value="I=1-367"/>
</dbReference>
<dbReference type="PDBsum" id="7DVQ"/>
<dbReference type="EMDB" id="EMD-30875"/>
<dbReference type="SMR" id="Q5RL73"/>
<dbReference type="BioGRID" id="123855">
    <property type="interactions" value="72"/>
</dbReference>
<dbReference type="FunCoup" id="Q5RL73">
    <property type="interactions" value="2134"/>
</dbReference>
<dbReference type="IntAct" id="Q5RL73">
    <property type="interactions" value="73"/>
</dbReference>
<dbReference type="MINT" id="Q5RL73"/>
<dbReference type="STRING" id="9606.ENSP00000265732"/>
<dbReference type="iPTMnet" id="Q5RL73"/>
<dbReference type="PhosphoSitePlus" id="Q5RL73"/>
<dbReference type="BioMuta" id="RBM48"/>
<dbReference type="DMDM" id="74736145"/>
<dbReference type="jPOST" id="Q5RL73"/>
<dbReference type="MassIVE" id="Q5RL73"/>
<dbReference type="PaxDb" id="9606-ENSP00000265732"/>
<dbReference type="PeptideAtlas" id="Q5RL73"/>
<dbReference type="ProteomicsDB" id="63754">
    <molecule id="Q5RL73-1"/>
</dbReference>
<dbReference type="Pumba" id="Q5RL73"/>
<dbReference type="Antibodypedia" id="8703">
    <property type="antibodies" value="121 antibodies from 17 providers"/>
</dbReference>
<dbReference type="DNASU" id="84060"/>
<dbReference type="Ensembl" id="ENST00000265732.10">
    <molecule id="Q5RL73-1"/>
    <property type="protein sequence ID" value="ENSP00000265732.5"/>
    <property type="gene ID" value="ENSG00000127993.16"/>
</dbReference>
<dbReference type="Ensembl" id="ENST00000481551.5">
    <molecule id="Q5RL73-2"/>
    <property type="protein sequence ID" value="ENSP00000419242.1"/>
    <property type="gene ID" value="ENSG00000127993.16"/>
</dbReference>
<dbReference type="GeneID" id="84060"/>
<dbReference type="KEGG" id="hsa:84060"/>
<dbReference type="MANE-Select" id="ENST00000265732.10">
    <property type="protein sequence ID" value="ENSP00000265732.5"/>
    <property type="RefSeq nucleotide sequence ID" value="NM_032120.4"/>
    <property type="RefSeq protein sequence ID" value="NP_115496.2"/>
</dbReference>
<dbReference type="UCSC" id="uc003ulz.4">
    <molecule id="Q5RL73-1"/>
    <property type="organism name" value="human"/>
</dbReference>
<dbReference type="AGR" id="HGNC:21785"/>
<dbReference type="CTD" id="84060"/>
<dbReference type="DisGeNET" id="84060"/>
<dbReference type="GeneCards" id="RBM48"/>
<dbReference type="HGNC" id="HGNC:21785">
    <property type="gene designation" value="RBM48"/>
</dbReference>
<dbReference type="HPA" id="ENSG00000127993">
    <property type="expression patterns" value="Low tissue specificity"/>
</dbReference>
<dbReference type="MalaCards" id="RBM48"/>
<dbReference type="MIM" id="621015">
    <property type="type" value="gene"/>
</dbReference>
<dbReference type="neXtProt" id="NX_Q5RL73"/>
<dbReference type="OpenTargets" id="ENSG00000127993"/>
<dbReference type="PharmGKB" id="PA164717383"/>
<dbReference type="VEuPathDB" id="HostDB:ENSG00000127993"/>
<dbReference type="eggNOG" id="ENOG502QSNB">
    <property type="taxonomic scope" value="Eukaryota"/>
</dbReference>
<dbReference type="GeneTree" id="ENSGT00390000004541"/>
<dbReference type="HOGENOM" id="CLU_065720_0_0_1"/>
<dbReference type="InParanoid" id="Q5RL73"/>
<dbReference type="OMA" id="PLCYFAS"/>
<dbReference type="OrthoDB" id="78358at2759"/>
<dbReference type="PAN-GO" id="Q5RL73">
    <property type="GO annotations" value="1 GO annotation based on evolutionary models"/>
</dbReference>
<dbReference type="PhylomeDB" id="Q5RL73"/>
<dbReference type="TreeFam" id="TF328457"/>
<dbReference type="PathwayCommons" id="Q5RL73"/>
<dbReference type="SignaLink" id="Q5RL73"/>
<dbReference type="BioGRID-ORCS" id="84060">
    <property type="hits" value="517 hits in 1163 CRISPR screens"/>
</dbReference>
<dbReference type="ChiTaRS" id="RBM48">
    <property type="organism name" value="human"/>
</dbReference>
<dbReference type="GenomeRNAi" id="84060"/>
<dbReference type="Pharos" id="Q5RL73">
    <property type="development level" value="Tdark"/>
</dbReference>
<dbReference type="PRO" id="PR:Q5RL73"/>
<dbReference type="Proteomes" id="UP000005640">
    <property type="component" value="Chromosome 7"/>
</dbReference>
<dbReference type="RNAct" id="Q5RL73">
    <property type="molecule type" value="protein"/>
</dbReference>
<dbReference type="Bgee" id="ENSG00000127993">
    <property type="expression patterns" value="Expressed in buccal mucosa cell and 182 other cell types or tissues"/>
</dbReference>
<dbReference type="ExpressionAtlas" id="Q5RL73">
    <property type="expression patterns" value="baseline and differential"/>
</dbReference>
<dbReference type="GO" id="GO:0005654">
    <property type="term" value="C:nucleoplasm"/>
    <property type="evidence" value="ECO:0000314"/>
    <property type="project" value="HPA"/>
</dbReference>
<dbReference type="GO" id="GO:0005681">
    <property type="term" value="C:spliceosomal complex"/>
    <property type="evidence" value="ECO:0007669"/>
    <property type="project" value="UniProtKB-KW"/>
</dbReference>
<dbReference type="GO" id="GO:0003723">
    <property type="term" value="F:RNA binding"/>
    <property type="evidence" value="ECO:0007669"/>
    <property type="project" value="UniProtKB-KW"/>
</dbReference>
<dbReference type="GO" id="GO:0006397">
    <property type="term" value="P:mRNA processing"/>
    <property type="evidence" value="ECO:0007669"/>
    <property type="project" value="UniProtKB-KW"/>
</dbReference>
<dbReference type="GO" id="GO:0008380">
    <property type="term" value="P:RNA splicing"/>
    <property type="evidence" value="ECO:0007669"/>
    <property type="project" value="UniProtKB-KW"/>
</dbReference>
<dbReference type="CDD" id="cd12442">
    <property type="entry name" value="RRM_RBM48"/>
    <property type="match status" value="1"/>
</dbReference>
<dbReference type="FunFam" id="3.30.70.330:FF:000424">
    <property type="entry name" value="RNA-binding protein 48 isoform X4"/>
    <property type="match status" value="1"/>
</dbReference>
<dbReference type="InterPro" id="IPR035979">
    <property type="entry name" value="RBD_domain_sf"/>
</dbReference>
<dbReference type="InterPro" id="IPR039599">
    <property type="entry name" value="RBM48"/>
</dbReference>
<dbReference type="InterPro" id="IPR034264">
    <property type="entry name" value="RBM48_RRM"/>
</dbReference>
<dbReference type="PANTHER" id="PTHR20957">
    <property type="entry name" value="RNA-BINDING PROTEIN 48"/>
    <property type="match status" value="1"/>
</dbReference>
<dbReference type="PANTHER" id="PTHR20957:SF1">
    <property type="entry name" value="RNA-BINDING PROTEIN 48"/>
    <property type="match status" value="1"/>
</dbReference>
<dbReference type="SUPFAM" id="SSF54928">
    <property type="entry name" value="RNA-binding domain, RBD"/>
    <property type="match status" value="1"/>
</dbReference>
<accession>Q5RL73</accession>
<accession>B7Z2K5</accession>
<accession>B7ZL51</accession>
<accession>Q5H9T2</accession>
<accession>Q8IYW7</accession>
<accession>Q96NS0</accession>
<accession>Q9H0V7</accession>
<organism>
    <name type="scientific">Homo sapiens</name>
    <name type="common">Human</name>
    <dbReference type="NCBI Taxonomy" id="9606"/>
    <lineage>
        <taxon>Eukaryota</taxon>
        <taxon>Metazoa</taxon>
        <taxon>Chordata</taxon>
        <taxon>Craniata</taxon>
        <taxon>Vertebrata</taxon>
        <taxon>Euteleostomi</taxon>
        <taxon>Mammalia</taxon>
        <taxon>Eutheria</taxon>
        <taxon>Euarchontoglires</taxon>
        <taxon>Primates</taxon>
        <taxon>Haplorrhini</taxon>
        <taxon>Catarrhini</taxon>
        <taxon>Hominidae</taxon>
        <taxon>Homo</taxon>
    </lineage>
</organism>
<gene>
    <name type="primary">RBM48</name>
    <name type="synonym">C7orf64</name>
    <name type="ORF">HSPC304</name>
</gene>
<sequence>MASSGGELGSLFDHHVQRAVCDTRAKYREGRRPRAVKVYTINLESQYLLIQGVPAVGVMKELVERFALYGAIEQYNALDEYPAEDFTEVYLIKFMNLQSARTAKRKMDEQSFFGGLLHVCYAPEFETVEETRKKLQMRKAYVVKTTENKDHYVTKKKLVTEHKDTEDFRQDFHSEMSGFCKAALNTSAGNSNPYLPYSCELPLCYFSSKCMCSSGGPVDRAPDSSKDGRNHHKTMGHYNHNDSLRKTQINSLKNSVACPGAQKAITSSEAVDRFMPRTTQLQERKRRREDDRKLGTFLQTNPTGNEIMIGPLLPDISKVDMHDDSLNTTANLIRHKLKEVISSVPKPPEDKPEDVHTSHPLKQRRRI</sequence>
<reference key="1">
    <citation type="journal article" date="2001" name="Genome Res.">
        <title>Towards a catalog of human genes and proteins: sequencing and analysis of 500 novel complete protein coding human cDNAs.</title>
        <authorList>
            <person name="Wiemann S."/>
            <person name="Weil B."/>
            <person name="Wellenreuther R."/>
            <person name="Gassenhuber J."/>
            <person name="Glassl S."/>
            <person name="Ansorge W."/>
            <person name="Boecher M."/>
            <person name="Bloecker H."/>
            <person name="Bauersachs S."/>
            <person name="Blum H."/>
            <person name="Lauber J."/>
            <person name="Duesterhoeft A."/>
            <person name="Beyer A."/>
            <person name="Koehrer K."/>
            <person name="Strack N."/>
            <person name="Mewes H.-W."/>
            <person name="Ottenwaelder B."/>
            <person name="Obermaier B."/>
            <person name="Tampe J."/>
            <person name="Heubner D."/>
            <person name="Wambutt R."/>
            <person name="Korn B."/>
            <person name="Klein M."/>
            <person name="Poustka A."/>
        </authorList>
    </citation>
    <scope>NUCLEOTIDE SEQUENCE [LARGE SCALE MRNA] (ISOFORM 1)</scope>
    <source>
        <tissue>Brain</tissue>
        <tissue>Endometrial adenocarcinoma</tissue>
    </source>
</reference>
<reference key="2">
    <citation type="journal article" date="2004" name="Nat. Genet.">
        <title>Complete sequencing and characterization of 21,243 full-length human cDNAs.</title>
        <authorList>
            <person name="Ota T."/>
            <person name="Suzuki Y."/>
            <person name="Nishikawa T."/>
            <person name="Otsuki T."/>
            <person name="Sugiyama T."/>
            <person name="Irie R."/>
            <person name="Wakamatsu A."/>
            <person name="Hayashi K."/>
            <person name="Sato H."/>
            <person name="Nagai K."/>
            <person name="Kimura K."/>
            <person name="Makita H."/>
            <person name="Sekine M."/>
            <person name="Obayashi M."/>
            <person name="Nishi T."/>
            <person name="Shibahara T."/>
            <person name="Tanaka T."/>
            <person name="Ishii S."/>
            <person name="Yamamoto J."/>
            <person name="Saito K."/>
            <person name="Kawai Y."/>
            <person name="Isono Y."/>
            <person name="Nakamura Y."/>
            <person name="Nagahari K."/>
            <person name="Murakami K."/>
            <person name="Yasuda T."/>
            <person name="Iwayanagi T."/>
            <person name="Wagatsuma M."/>
            <person name="Shiratori A."/>
            <person name="Sudo H."/>
            <person name="Hosoiri T."/>
            <person name="Kaku Y."/>
            <person name="Kodaira H."/>
            <person name="Kondo H."/>
            <person name="Sugawara M."/>
            <person name="Takahashi M."/>
            <person name="Kanda K."/>
            <person name="Yokoi T."/>
            <person name="Furuya T."/>
            <person name="Kikkawa E."/>
            <person name="Omura Y."/>
            <person name="Abe K."/>
            <person name="Kamihara K."/>
            <person name="Katsuta N."/>
            <person name="Sato K."/>
            <person name="Tanikawa M."/>
            <person name="Yamazaki M."/>
            <person name="Ninomiya K."/>
            <person name="Ishibashi T."/>
            <person name="Yamashita H."/>
            <person name="Murakawa K."/>
            <person name="Fujimori K."/>
            <person name="Tanai H."/>
            <person name="Kimata M."/>
            <person name="Watanabe M."/>
            <person name="Hiraoka S."/>
            <person name="Chiba Y."/>
            <person name="Ishida S."/>
            <person name="Ono Y."/>
            <person name="Takiguchi S."/>
            <person name="Watanabe S."/>
            <person name="Yosida M."/>
            <person name="Hotuta T."/>
            <person name="Kusano J."/>
            <person name="Kanehori K."/>
            <person name="Takahashi-Fujii A."/>
            <person name="Hara H."/>
            <person name="Tanase T.-O."/>
            <person name="Nomura Y."/>
            <person name="Togiya S."/>
            <person name="Komai F."/>
            <person name="Hara R."/>
            <person name="Takeuchi K."/>
            <person name="Arita M."/>
            <person name="Imose N."/>
            <person name="Musashino K."/>
            <person name="Yuuki H."/>
            <person name="Oshima A."/>
            <person name="Sasaki N."/>
            <person name="Aotsuka S."/>
            <person name="Yoshikawa Y."/>
            <person name="Matsunawa H."/>
            <person name="Ichihara T."/>
            <person name="Shiohata N."/>
            <person name="Sano S."/>
            <person name="Moriya S."/>
            <person name="Momiyama H."/>
            <person name="Satoh N."/>
            <person name="Takami S."/>
            <person name="Terashima Y."/>
            <person name="Suzuki O."/>
            <person name="Nakagawa S."/>
            <person name="Senoh A."/>
            <person name="Mizoguchi H."/>
            <person name="Goto Y."/>
            <person name="Shimizu F."/>
            <person name="Wakebe H."/>
            <person name="Hishigaki H."/>
            <person name="Watanabe T."/>
            <person name="Sugiyama A."/>
            <person name="Takemoto M."/>
            <person name="Kawakami B."/>
            <person name="Yamazaki M."/>
            <person name="Watanabe K."/>
            <person name="Kumagai A."/>
            <person name="Itakura S."/>
            <person name="Fukuzumi Y."/>
            <person name="Fujimori Y."/>
            <person name="Komiyama M."/>
            <person name="Tashiro H."/>
            <person name="Tanigami A."/>
            <person name="Fujiwara T."/>
            <person name="Ono T."/>
            <person name="Yamada K."/>
            <person name="Fujii Y."/>
            <person name="Ozaki K."/>
            <person name="Hirao M."/>
            <person name="Ohmori Y."/>
            <person name="Kawabata A."/>
            <person name="Hikiji T."/>
            <person name="Kobatake N."/>
            <person name="Inagaki H."/>
            <person name="Ikema Y."/>
            <person name="Okamoto S."/>
            <person name="Okitani R."/>
            <person name="Kawakami T."/>
            <person name="Noguchi S."/>
            <person name="Itoh T."/>
            <person name="Shigeta K."/>
            <person name="Senba T."/>
            <person name="Matsumura K."/>
            <person name="Nakajima Y."/>
            <person name="Mizuno T."/>
            <person name="Morinaga M."/>
            <person name="Sasaki M."/>
            <person name="Togashi T."/>
            <person name="Oyama M."/>
            <person name="Hata H."/>
            <person name="Watanabe M."/>
            <person name="Komatsu T."/>
            <person name="Mizushima-Sugano J."/>
            <person name="Satoh T."/>
            <person name="Shirai Y."/>
            <person name="Takahashi Y."/>
            <person name="Nakagawa K."/>
            <person name="Okumura K."/>
            <person name="Nagase T."/>
            <person name="Nomura N."/>
            <person name="Kikuchi H."/>
            <person name="Masuho Y."/>
            <person name="Yamashita R."/>
            <person name="Nakai K."/>
            <person name="Yada T."/>
            <person name="Nakamura Y."/>
            <person name="Ohara O."/>
            <person name="Isogai T."/>
            <person name="Sugano S."/>
        </authorList>
    </citation>
    <scope>NUCLEOTIDE SEQUENCE [LARGE SCALE MRNA] (ISOFORM 2)</scope>
    <scope>NUCLEOTIDE SEQUENCE [LARGE SCALE MRNA] OF 180-367 (ISOFORM 1)</scope>
    <source>
        <tissue>Brain</tissue>
        <tissue>Cerebellum</tissue>
    </source>
</reference>
<reference key="3">
    <citation type="journal article" date="2003" name="Nature">
        <title>The DNA sequence of human chromosome 7.</title>
        <authorList>
            <person name="Hillier L.W."/>
            <person name="Fulton R.S."/>
            <person name="Fulton L.A."/>
            <person name="Graves T.A."/>
            <person name="Pepin K.H."/>
            <person name="Wagner-McPherson C."/>
            <person name="Layman D."/>
            <person name="Maas J."/>
            <person name="Jaeger S."/>
            <person name="Walker R."/>
            <person name="Wylie K."/>
            <person name="Sekhon M."/>
            <person name="Becker M.C."/>
            <person name="O'Laughlin M.D."/>
            <person name="Schaller M.E."/>
            <person name="Fewell G.A."/>
            <person name="Delehaunty K.D."/>
            <person name="Miner T.L."/>
            <person name="Nash W.E."/>
            <person name="Cordes M."/>
            <person name="Du H."/>
            <person name="Sun H."/>
            <person name="Edwards J."/>
            <person name="Bradshaw-Cordum H."/>
            <person name="Ali J."/>
            <person name="Andrews S."/>
            <person name="Isak A."/>
            <person name="Vanbrunt A."/>
            <person name="Nguyen C."/>
            <person name="Du F."/>
            <person name="Lamar B."/>
            <person name="Courtney L."/>
            <person name="Kalicki J."/>
            <person name="Ozersky P."/>
            <person name="Bielicki L."/>
            <person name="Scott K."/>
            <person name="Holmes A."/>
            <person name="Harkins R."/>
            <person name="Harris A."/>
            <person name="Strong C.M."/>
            <person name="Hou S."/>
            <person name="Tomlinson C."/>
            <person name="Dauphin-Kohlberg S."/>
            <person name="Kozlowicz-Reilly A."/>
            <person name="Leonard S."/>
            <person name="Rohlfing T."/>
            <person name="Rock S.M."/>
            <person name="Tin-Wollam A.-M."/>
            <person name="Abbott A."/>
            <person name="Minx P."/>
            <person name="Maupin R."/>
            <person name="Strowmatt C."/>
            <person name="Latreille P."/>
            <person name="Miller N."/>
            <person name="Johnson D."/>
            <person name="Murray J."/>
            <person name="Woessner J.P."/>
            <person name="Wendl M.C."/>
            <person name="Yang S.-P."/>
            <person name="Schultz B.R."/>
            <person name="Wallis J.W."/>
            <person name="Spieth J."/>
            <person name="Bieri T.A."/>
            <person name="Nelson J.O."/>
            <person name="Berkowicz N."/>
            <person name="Wohldmann P.E."/>
            <person name="Cook L.L."/>
            <person name="Hickenbotham M.T."/>
            <person name="Eldred J."/>
            <person name="Williams D."/>
            <person name="Bedell J.A."/>
            <person name="Mardis E.R."/>
            <person name="Clifton S.W."/>
            <person name="Chissoe S.L."/>
            <person name="Marra M.A."/>
            <person name="Raymond C."/>
            <person name="Haugen E."/>
            <person name="Gillett W."/>
            <person name="Zhou Y."/>
            <person name="James R."/>
            <person name="Phelps K."/>
            <person name="Iadanoto S."/>
            <person name="Bubb K."/>
            <person name="Simms E."/>
            <person name="Levy R."/>
            <person name="Clendenning J."/>
            <person name="Kaul R."/>
            <person name="Kent W.J."/>
            <person name="Furey T.S."/>
            <person name="Baertsch R.A."/>
            <person name="Brent M.R."/>
            <person name="Keibler E."/>
            <person name="Flicek P."/>
            <person name="Bork P."/>
            <person name="Suyama M."/>
            <person name="Bailey J.A."/>
            <person name="Portnoy M.E."/>
            <person name="Torrents D."/>
            <person name="Chinwalla A.T."/>
            <person name="Gish W.R."/>
            <person name="Eddy S.R."/>
            <person name="McPherson J.D."/>
            <person name="Olson M.V."/>
            <person name="Eichler E.E."/>
            <person name="Green E.D."/>
            <person name="Waterston R.H."/>
            <person name="Wilson R.K."/>
        </authorList>
    </citation>
    <scope>NUCLEOTIDE SEQUENCE [LARGE SCALE GENOMIC DNA]</scope>
</reference>
<reference key="4">
    <citation type="submission" date="2005-09" db="EMBL/GenBank/DDBJ databases">
        <authorList>
            <person name="Mural R.J."/>
            <person name="Istrail S."/>
            <person name="Sutton G.G."/>
            <person name="Florea L."/>
            <person name="Halpern A.L."/>
            <person name="Mobarry C.M."/>
            <person name="Lippert R."/>
            <person name="Walenz B."/>
            <person name="Shatkay H."/>
            <person name="Dew I."/>
            <person name="Miller J.R."/>
            <person name="Flanigan M.J."/>
            <person name="Edwards N.J."/>
            <person name="Bolanos R."/>
            <person name="Fasulo D."/>
            <person name="Halldorsson B.V."/>
            <person name="Hannenhalli S."/>
            <person name="Turner R."/>
            <person name="Yooseph S."/>
            <person name="Lu F."/>
            <person name="Nusskern D.R."/>
            <person name="Shue B.C."/>
            <person name="Zheng X.H."/>
            <person name="Zhong F."/>
            <person name="Delcher A.L."/>
            <person name="Huson D.H."/>
            <person name="Kravitz S.A."/>
            <person name="Mouchard L."/>
            <person name="Reinert K."/>
            <person name="Remington K.A."/>
            <person name="Clark A.G."/>
            <person name="Waterman M.S."/>
            <person name="Eichler E.E."/>
            <person name="Adams M.D."/>
            <person name="Hunkapiller M.W."/>
            <person name="Myers E.W."/>
            <person name="Venter J.C."/>
        </authorList>
    </citation>
    <scope>NUCLEOTIDE SEQUENCE [LARGE SCALE GENOMIC DNA]</scope>
</reference>
<reference key="5">
    <citation type="journal article" date="2004" name="Genome Res.">
        <title>The status, quality, and expansion of the NIH full-length cDNA project: the Mammalian Gene Collection (MGC).</title>
        <authorList>
            <consortium name="The MGC Project Team"/>
        </authorList>
    </citation>
    <scope>NUCLEOTIDE SEQUENCE [LARGE SCALE MRNA] (ISOFORM 1)</scope>
    <source>
        <tissue>Brain</tissue>
        <tissue>Lung</tissue>
        <tissue>Testis</tissue>
    </source>
</reference>
<reference evidence="6" key="6">
    <citation type="journal article" date="2021" name="Science">
        <title>Structure of the activated human minor spliceosome.</title>
        <authorList>
            <person name="Bai R."/>
            <person name="Wan R."/>
            <person name="Wang L."/>
            <person name="Xu K."/>
            <person name="Zhang Q."/>
            <person name="Lei J."/>
            <person name="Shi Y."/>
        </authorList>
    </citation>
    <scope>STRUCTURE BY ELECTRON MICROSCOPY (2.89 ANGSTROMS)</scope>
    <scope>FUNCTION</scope>
    <scope>SUBUNIT</scope>
</reference>
<protein>
    <recommendedName>
        <fullName>RNA-binding protein 48</fullName>
    </recommendedName>
</protein>
<feature type="chain" id="PRO_0000321514" description="RNA-binding protein 48">
    <location>
        <begin position="1"/>
        <end position="367"/>
    </location>
</feature>
<feature type="domain" description="RRM">
    <location>
        <begin position="46"/>
        <end position="124"/>
    </location>
</feature>
<feature type="region of interest" description="Disordered" evidence="1">
    <location>
        <begin position="217"/>
        <end position="243"/>
    </location>
</feature>
<feature type="region of interest" description="Disordered" evidence="1">
    <location>
        <begin position="280"/>
        <end position="302"/>
    </location>
</feature>
<feature type="region of interest" description="Disordered" evidence="1">
    <location>
        <begin position="343"/>
        <end position="367"/>
    </location>
</feature>
<feature type="compositionally biased region" description="Basic and acidic residues" evidence="1">
    <location>
        <begin position="347"/>
        <end position="357"/>
    </location>
</feature>
<feature type="splice variant" id="VSP_056683" description="In isoform 2." evidence="3">
    <original>ISSVPKPPEDKPEDVHTSHPLKQRRRI</original>
    <variation>RLFLKNYSKTRFGYRIKWRIICGNNSTVIFFHFLVF</variation>
    <location>
        <begin position="341"/>
        <end position="367"/>
    </location>
</feature>
<feature type="sequence conflict" description="In Ref. 1; CAB66554." evidence="4" ref="1">
    <original>L</original>
    <variation>P</variation>
    <location>
        <position position="8"/>
    </location>
</feature>
<feature type="sequence conflict" description="In Ref. 2; BAB70806." evidence="4" ref="2">
    <original>R</original>
    <variation>K</variation>
    <location>
        <position position="229"/>
    </location>
</feature>
<feature type="sequence conflict" description="In Ref. 2; BAB70806." evidence="4" ref="2">
    <original>H</original>
    <variation>R</variation>
    <location>
        <position position="359"/>
    </location>
</feature>
<feature type="turn" evidence="7">
    <location>
        <begin position="41"/>
        <end position="43"/>
    </location>
</feature>
<feature type="strand" evidence="7">
    <location>
        <begin position="46"/>
        <end position="57"/>
    </location>
</feature>
<feature type="helix" evidence="7">
    <location>
        <begin position="59"/>
        <end position="67"/>
    </location>
</feature>
<feature type="strand" evidence="7">
    <location>
        <begin position="72"/>
        <end position="77"/>
    </location>
</feature>
<feature type="strand" evidence="7">
    <location>
        <begin position="79"/>
        <end position="81"/>
    </location>
</feature>
<feature type="strand" evidence="7">
    <location>
        <begin position="87"/>
        <end position="96"/>
    </location>
</feature>
<feature type="helix" evidence="7">
    <location>
        <begin position="97"/>
        <end position="107"/>
    </location>
</feature>
<feature type="strand" evidence="7">
    <location>
        <begin position="118"/>
        <end position="121"/>
    </location>
</feature>
<feature type="turn" evidence="7">
    <location>
        <begin position="123"/>
        <end position="125"/>
    </location>
</feature>
<feature type="helix" evidence="7">
    <location>
        <begin position="128"/>
        <end position="143"/>
    </location>
</feature>